<keyword id="KW-0963">Cytoplasm</keyword>
<keyword id="KW-0880">Kelch repeat</keyword>
<keyword id="KW-0539">Nucleus</keyword>
<keyword id="KW-1185">Reference proteome</keyword>
<keyword id="KW-0677">Repeat</keyword>
<keyword id="KW-0702">S-nitrosylation</keyword>
<keyword id="KW-0883">Thioether bond</keyword>
<keyword id="KW-0832">Ubl conjugation</keyword>
<keyword id="KW-0833">Ubl conjugation pathway</keyword>
<feature type="chain" id="PRO_0000286392" description="Kelch-like ECH-associated protein 1">
    <location>
        <begin position="1"/>
        <end position="624"/>
    </location>
</feature>
<feature type="domain" description="BTB" evidence="3">
    <location>
        <begin position="77"/>
        <end position="149"/>
    </location>
</feature>
<feature type="domain" description="BACK">
    <location>
        <begin position="184"/>
        <end position="286"/>
    </location>
</feature>
<feature type="repeat" description="Kelch 1">
    <location>
        <begin position="327"/>
        <end position="372"/>
    </location>
</feature>
<feature type="repeat" description="Kelch 2">
    <location>
        <begin position="373"/>
        <end position="423"/>
    </location>
</feature>
<feature type="repeat" description="Kelch 3">
    <location>
        <begin position="424"/>
        <end position="470"/>
    </location>
</feature>
<feature type="repeat" description="Kelch 4">
    <location>
        <begin position="471"/>
        <end position="517"/>
    </location>
</feature>
<feature type="repeat" description="Kelch 5">
    <location>
        <begin position="519"/>
        <end position="564"/>
    </location>
</feature>
<feature type="repeat" description="Kelch 6">
    <location>
        <begin position="565"/>
        <end position="611"/>
    </location>
</feature>
<feature type="region of interest" description="Disordered" evidence="4">
    <location>
        <begin position="1"/>
        <end position="27"/>
    </location>
</feature>
<feature type="site" description="Sensor for electrophilic agents" evidence="2">
    <location>
        <position position="151"/>
    </location>
</feature>
<feature type="site" description="Sensor for electrophilic agents" evidence="1">
    <location>
        <position position="257"/>
    </location>
</feature>
<feature type="site" description="Sensor for electrophilic agents" evidence="1">
    <location>
        <position position="273"/>
    </location>
</feature>
<feature type="site" description="Sensor for electrophilic agents" evidence="2">
    <location>
        <position position="288"/>
    </location>
</feature>
<feature type="site" description="Sensor for electrophilic agents" evidence="2">
    <location>
        <position position="434"/>
    </location>
</feature>
<feature type="modified residue" description="S-(2-succinyl)cysteine" evidence="2">
    <location>
        <position position="38"/>
    </location>
</feature>
<feature type="modified residue" description="S-(2,3-dicarboxypropyl)cysteine; alternate" evidence="1">
    <location>
        <position position="151"/>
    </location>
</feature>
<feature type="modified residue" description="S-(2-succinyl)cysteine" evidence="2">
    <location>
        <position position="151"/>
    </location>
</feature>
<feature type="modified residue" description="S-nitrosocysteine; alternate" evidence="2">
    <location>
        <position position="151"/>
    </location>
</feature>
<feature type="modified residue" description="S-(2-succinyl)cysteine" evidence="2">
    <location>
        <position position="241"/>
    </location>
</feature>
<feature type="modified residue" description="S-(2,3-dicarboxypropyl)cysteine" evidence="1">
    <location>
        <position position="257"/>
    </location>
</feature>
<feature type="modified residue" description="S-(2,3-dicarboxypropyl)cysteine" evidence="1">
    <location>
        <position position="273"/>
    </location>
</feature>
<feature type="modified residue" description="S-(2,3-dicarboxypropyl)cysteine; alternate" evidence="1">
    <location>
        <position position="288"/>
    </location>
</feature>
<feature type="modified residue" description="S-(2-succinyl)cysteine" evidence="2">
    <location>
        <position position="288"/>
    </location>
</feature>
<feature type="modified residue" description="S-(2-succinyl)cysteine" evidence="2">
    <location>
        <position position="319"/>
    </location>
</feature>
<feature type="modified residue" description="S-cGMP-cysteine" evidence="2">
    <location>
        <position position="434"/>
    </location>
</feature>
<feature type="modified residue" description="S-(2-succinyl)cysteine" evidence="2">
    <location>
        <position position="613"/>
    </location>
</feature>
<feature type="cross-link" description="N5-[4-(S-L-cysteinyl)-5-methyl-1H-imidazol-2-yl]-L-ornithine (Arg-Cys) (interchain with C-151 in KEAP1)" evidence="1">
    <location>
        <position position="135"/>
    </location>
</feature>
<feature type="cross-link" description="N5-[4-(S-L-cysteinyl)-5-methyl-1H-imidazol-2-yl]-L-ornithine (Cys-Arg) (interchain with R-135 in KEAP1)" evidence="1">
    <location>
        <position position="151"/>
    </location>
</feature>
<name>KEAP1_PIG</name>
<sequence length="624" mass="69816">MQPEPRPSGAGAHTQFLPLRSQRPEGAGDTVMYASTECKAEVTPSQHGNRTFSYTLEDHTKQAFGIMNELRLSQQLCDVTLQVKYEDAPAAQFMAHKVVLASSSPVFKAMFTNGLREQGMEVVSIEGIHPKVMERLIEFAYTASISMGEKCVLHVMNGAVMYQIDSVVRACSDFLVQQLDPSNAIGIANFAEQIGCAELHQRAREYIYMHFGEVAKQEEFFNLSHCQLVTLISRDDLNVRCESEVFHACINWVKYDCEQRRFYVQALLRAVRCHSLTPHFLQMQLQKCEILQSDSRCKDYLVKIFQELTLHKPTQVMPCRAPKVGRLIYTAGGYFRQSLSYLEAYNPSDGTWLRLADLQVPRSGLAGCVVGGLLYAVGGRNNSPDGNTDSSALDCYNPMTNQWSPCAPMSVPRNRIGVGVIDGHIYAVGGSHGCIHHNSVERYEPERDEWHLVAPMLTRRIGVGVAVLNRLLYAVGGFDGTNRLNSAECYYPERNEWRMITPMNTIRSGAGVCVLHNCIYAAGGYDGQDQLNSVERYDVETETWTFVAPMKHRRSALGITVHQGRIYVLGGYDGHTFLDSVECYDPDTDTWSEVTRMTSGRSGVGVAVTMEPCRKQIDQQNCTC</sequence>
<gene>
    <name evidence="1" type="primary">KEAP1</name>
</gene>
<evidence type="ECO:0000250" key="1">
    <source>
        <dbReference type="UniProtKB" id="Q14145"/>
    </source>
</evidence>
<evidence type="ECO:0000250" key="2">
    <source>
        <dbReference type="UniProtKB" id="Q9Z2X8"/>
    </source>
</evidence>
<evidence type="ECO:0000255" key="3">
    <source>
        <dbReference type="PROSITE-ProRule" id="PRU00037"/>
    </source>
</evidence>
<evidence type="ECO:0000256" key="4">
    <source>
        <dbReference type="SAM" id="MobiDB-lite"/>
    </source>
</evidence>
<evidence type="ECO:0000305" key="5"/>
<reference key="1">
    <citation type="journal article" date="2004" name="Cytogenet. Genome Res.">
        <title>Molecular characterization of the porcine TYK2 gene on SSC 2q1.3 -&gt; q2.1.</title>
        <authorList>
            <person name="Leeb T."/>
            <person name="Martins-Wess F."/>
            <person name="Kuiper H."/>
            <person name="Lassnig C."/>
            <person name="Distl O."/>
            <person name="Mueller M."/>
        </authorList>
    </citation>
    <scope>NUCLEOTIDE SEQUENCE [GENOMIC DNA]</scope>
</reference>
<dbReference type="EMBL" id="AJ632303">
    <property type="protein sequence ID" value="CAG15151.1"/>
    <property type="molecule type" value="Genomic_DNA"/>
</dbReference>
<dbReference type="RefSeq" id="NP_001108143.1">
    <property type="nucleotide sequence ID" value="NM_001114671.1"/>
</dbReference>
<dbReference type="RefSeq" id="XP_003480844.1">
    <property type="nucleotide sequence ID" value="XM_003480796.3"/>
</dbReference>
<dbReference type="RefSeq" id="XP_005654868.1">
    <property type="nucleotide sequence ID" value="XM_005654811.3"/>
</dbReference>
<dbReference type="RefSeq" id="XP_005654915.1">
    <property type="nucleotide sequence ID" value="XM_005654858.2"/>
</dbReference>
<dbReference type="RefSeq" id="XP_013842850.1">
    <property type="nucleotide sequence ID" value="XM_013987396.2"/>
</dbReference>
<dbReference type="RefSeq" id="XP_013842889.1">
    <property type="nucleotide sequence ID" value="XM_013987435.1"/>
</dbReference>
<dbReference type="RefSeq" id="XP_020932313.1">
    <property type="nucleotide sequence ID" value="XM_021076654.1"/>
</dbReference>
<dbReference type="BMRB" id="Q684M4"/>
<dbReference type="SMR" id="Q684M4"/>
<dbReference type="FunCoup" id="Q684M4">
    <property type="interactions" value="1555"/>
</dbReference>
<dbReference type="STRING" id="9823.ENSSSCP00000056325"/>
<dbReference type="PaxDb" id="9823-ENSSSCP00000014494"/>
<dbReference type="PeptideAtlas" id="Q684M4"/>
<dbReference type="Ensembl" id="ENSSSCT00000064933.3">
    <property type="protein sequence ID" value="ENSSSCP00000056325.1"/>
    <property type="gene ID" value="ENSSSCG00000023667.4"/>
</dbReference>
<dbReference type="Ensembl" id="ENSSSCT00015102051.1">
    <property type="protein sequence ID" value="ENSSSCP00015042290.1"/>
    <property type="gene ID" value="ENSSSCG00015075784.1"/>
</dbReference>
<dbReference type="Ensembl" id="ENSSSCT00015102197.1">
    <property type="protein sequence ID" value="ENSSSCP00015042375.1"/>
    <property type="gene ID" value="ENSSSCG00015075784.1"/>
</dbReference>
<dbReference type="Ensembl" id="ENSSSCT00015102250.1">
    <property type="protein sequence ID" value="ENSSSCP00015042405.1"/>
    <property type="gene ID" value="ENSSSCG00015075784.1"/>
</dbReference>
<dbReference type="Ensembl" id="ENSSSCT00025106201.1">
    <property type="protein sequence ID" value="ENSSSCP00025047624.1"/>
    <property type="gene ID" value="ENSSSCG00025076625.1"/>
</dbReference>
<dbReference type="Ensembl" id="ENSSSCT00030037887.1">
    <property type="protein sequence ID" value="ENSSSCP00030017385.1"/>
    <property type="gene ID" value="ENSSSCG00030027089.1"/>
</dbReference>
<dbReference type="Ensembl" id="ENSSSCT00035030900.1">
    <property type="protein sequence ID" value="ENSSSCP00035012077.1"/>
    <property type="gene ID" value="ENSSSCG00035023559.1"/>
</dbReference>
<dbReference type="Ensembl" id="ENSSSCT00040005197.1">
    <property type="protein sequence ID" value="ENSSSCP00040001813.1"/>
    <property type="gene ID" value="ENSSSCG00040004054.1"/>
</dbReference>
<dbReference type="Ensembl" id="ENSSSCT00045012195.1">
    <property type="protein sequence ID" value="ENSSSCP00045008323.1"/>
    <property type="gene ID" value="ENSSSCG00045007314.1"/>
</dbReference>
<dbReference type="Ensembl" id="ENSSSCT00050026158.1">
    <property type="protein sequence ID" value="ENSSSCP00050010819.1"/>
    <property type="gene ID" value="ENSSSCG00050019378.1"/>
</dbReference>
<dbReference type="Ensembl" id="ENSSSCT00055055655.1">
    <property type="protein sequence ID" value="ENSSSCP00055044419.1"/>
    <property type="gene ID" value="ENSSSCG00055028108.1"/>
</dbReference>
<dbReference type="Ensembl" id="ENSSSCT00055055790.1">
    <property type="protein sequence ID" value="ENSSSCP00055044535.1"/>
    <property type="gene ID" value="ENSSSCG00055028108.1"/>
</dbReference>
<dbReference type="Ensembl" id="ENSSSCT00055055831.1">
    <property type="protein sequence ID" value="ENSSSCP00055044571.1"/>
    <property type="gene ID" value="ENSSSCG00055028108.1"/>
</dbReference>
<dbReference type="Ensembl" id="ENSSSCT00060049165.1">
    <property type="protein sequence ID" value="ENSSSCP00060021043.1"/>
    <property type="gene ID" value="ENSSSCG00060036281.1"/>
</dbReference>
<dbReference type="Ensembl" id="ENSSSCT00065109073.1">
    <property type="protein sequence ID" value="ENSSSCP00065048936.1"/>
    <property type="gene ID" value="ENSSSCG00065078612.1"/>
</dbReference>
<dbReference type="Ensembl" id="ENSSSCT00065109081.1">
    <property type="protein sequence ID" value="ENSSSCP00065048944.1"/>
    <property type="gene ID" value="ENSSSCG00065078612.1"/>
</dbReference>
<dbReference type="Ensembl" id="ENSSSCT00065109085.1">
    <property type="protein sequence ID" value="ENSSSCP00065048948.1"/>
    <property type="gene ID" value="ENSSSCG00065078612.1"/>
</dbReference>
<dbReference type="Ensembl" id="ENSSSCT00105073425">
    <property type="protein sequence ID" value="ENSSSCP00105052195"/>
    <property type="gene ID" value="ENSSSCG00105038368"/>
</dbReference>
<dbReference type="Ensembl" id="ENSSSCT00110054876">
    <property type="protein sequence ID" value="ENSSSCP00110038099"/>
    <property type="gene ID" value="ENSSSCG00110028653"/>
</dbReference>
<dbReference type="Ensembl" id="ENSSSCT00115020728">
    <property type="protein sequence ID" value="ENSSSCP00115019627"/>
    <property type="gene ID" value="ENSSSCG00115012003"/>
</dbReference>
<dbReference type="Ensembl" id="ENSSSCT00130072258">
    <property type="protein sequence ID" value="ENSSSCP00130052026"/>
    <property type="gene ID" value="ENSSSCG00130037083"/>
</dbReference>
<dbReference type="GeneID" id="100136900"/>
<dbReference type="KEGG" id="ssc:100136900"/>
<dbReference type="CTD" id="9817"/>
<dbReference type="VGNC" id="VGNC:89419">
    <property type="gene designation" value="KEAP1"/>
</dbReference>
<dbReference type="eggNOG" id="KOG4441">
    <property type="taxonomic scope" value="Eukaryota"/>
</dbReference>
<dbReference type="GeneTree" id="ENSGT00940000159543"/>
<dbReference type="HOGENOM" id="CLU_004253_13_2_1"/>
<dbReference type="InParanoid" id="Q684M4"/>
<dbReference type="OMA" id="TECLTEY"/>
<dbReference type="OrthoDB" id="45365at2759"/>
<dbReference type="TreeFam" id="TF329218"/>
<dbReference type="Reactome" id="R-SSC-5689880">
    <property type="pathway name" value="Ub-specific processing proteases"/>
</dbReference>
<dbReference type="Reactome" id="R-SSC-8951664">
    <property type="pathway name" value="Neddylation"/>
</dbReference>
<dbReference type="Reactome" id="R-SSC-9755511">
    <property type="pathway name" value="KEAP1-NFE2L2 pathway"/>
</dbReference>
<dbReference type="Reactome" id="R-SSC-983168">
    <property type="pathway name" value="Antigen processing: Ubiquitination &amp; Proteasome degradation"/>
</dbReference>
<dbReference type="UniPathway" id="UPA00143"/>
<dbReference type="Proteomes" id="UP000008227">
    <property type="component" value="Chromosome 2"/>
</dbReference>
<dbReference type="Proteomes" id="UP000314985">
    <property type="component" value="Unplaced"/>
</dbReference>
<dbReference type="Proteomes" id="UP000694570">
    <property type="component" value="Unplaced"/>
</dbReference>
<dbReference type="Proteomes" id="UP000694571">
    <property type="component" value="Unplaced"/>
</dbReference>
<dbReference type="Proteomes" id="UP000694720">
    <property type="component" value="Unplaced"/>
</dbReference>
<dbReference type="Proteomes" id="UP000694722">
    <property type="component" value="Unplaced"/>
</dbReference>
<dbReference type="Proteomes" id="UP000694723">
    <property type="component" value="Unplaced"/>
</dbReference>
<dbReference type="Proteomes" id="UP000694724">
    <property type="component" value="Unplaced"/>
</dbReference>
<dbReference type="Proteomes" id="UP000694725">
    <property type="component" value="Unplaced"/>
</dbReference>
<dbReference type="Proteomes" id="UP000694726">
    <property type="component" value="Unplaced"/>
</dbReference>
<dbReference type="Proteomes" id="UP000694727">
    <property type="component" value="Unplaced"/>
</dbReference>
<dbReference type="Proteomes" id="UP000694728">
    <property type="component" value="Unplaced"/>
</dbReference>
<dbReference type="Bgee" id="ENSSSCG00000023667">
    <property type="expression patterns" value="Expressed in semimembranosus muscle and 40 other cell types or tissues"/>
</dbReference>
<dbReference type="ExpressionAtlas" id="Q684M4">
    <property type="expression patterns" value="baseline and differential"/>
</dbReference>
<dbReference type="GO" id="GO:0005884">
    <property type="term" value="C:actin filament"/>
    <property type="evidence" value="ECO:0007669"/>
    <property type="project" value="Ensembl"/>
</dbReference>
<dbReference type="GO" id="GO:0034451">
    <property type="term" value="C:centriolar satellite"/>
    <property type="evidence" value="ECO:0007669"/>
    <property type="project" value="Ensembl"/>
</dbReference>
<dbReference type="GO" id="GO:0031463">
    <property type="term" value="C:Cul3-RING ubiquitin ligase complex"/>
    <property type="evidence" value="ECO:0000250"/>
    <property type="project" value="UniProtKB"/>
</dbReference>
<dbReference type="GO" id="GO:0005737">
    <property type="term" value="C:cytoplasm"/>
    <property type="evidence" value="ECO:0000250"/>
    <property type="project" value="UniProtKB"/>
</dbReference>
<dbReference type="GO" id="GO:0005829">
    <property type="term" value="C:cytosol"/>
    <property type="evidence" value="ECO:0007669"/>
    <property type="project" value="Ensembl"/>
</dbReference>
<dbReference type="GO" id="GO:0005783">
    <property type="term" value="C:endoplasmic reticulum"/>
    <property type="evidence" value="ECO:0007669"/>
    <property type="project" value="Ensembl"/>
</dbReference>
<dbReference type="GO" id="GO:0016234">
    <property type="term" value="C:inclusion body"/>
    <property type="evidence" value="ECO:0000250"/>
    <property type="project" value="UniProtKB"/>
</dbReference>
<dbReference type="GO" id="GO:0030496">
    <property type="term" value="C:midbody"/>
    <property type="evidence" value="ECO:0007669"/>
    <property type="project" value="Ensembl"/>
</dbReference>
<dbReference type="GO" id="GO:0005654">
    <property type="term" value="C:nucleoplasm"/>
    <property type="evidence" value="ECO:0007669"/>
    <property type="project" value="Ensembl"/>
</dbReference>
<dbReference type="GO" id="GO:0097718">
    <property type="term" value="F:disordered domain specific binding"/>
    <property type="evidence" value="ECO:0007669"/>
    <property type="project" value="Ensembl"/>
</dbReference>
<dbReference type="GO" id="GO:0042802">
    <property type="term" value="F:identical protein binding"/>
    <property type="evidence" value="ECO:0007669"/>
    <property type="project" value="Ensembl"/>
</dbReference>
<dbReference type="GO" id="GO:0061629">
    <property type="term" value="F:RNA polymerase II-specific DNA-binding transcription factor binding"/>
    <property type="evidence" value="ECO:0007669"/>
    <property type="project" value="Ensembl"/>
</dbReference>
<dbReference type="GO" id="GO:0140416">
    <property type="term" value="F:transcription regulator inhibitor activity"/>
    <property type="evidence" value="ECO:0007669"/>
    <property type="project" value="Ensembl"/>
</dbReference>
<dbReference type="GO" id="GO:1990756">
    <property type="term" value="F:ubiquitin-like ligase-substrate adaptor activity"/>
    <property type="evidence" value="ECO:0000318"/>
    <property type="project" value="GO_Central"/>
</dbReference>
<dbReference type="GO" id="GO:0071353">
    <property type="term" value="P:cellular response to interleukin-4"/>
    <property type="evidence" value="ECO:0007669"/>
    <property type="project" value="Ensembl"/>
</dbReference>
<dbReference type="GO" id="GO:0034599">
    <property type="term" value="P:cellular response to oxidative stress"/>
    <property type="evidence" value="ECO:0000250"/>
    <property type="project" value="UniProtKB"/>
</dbReference>
<dbReference type="GO" id="GO:0001701">
    <property type="term" value="P:in utero embryonic development"/>
    <property type="evidence" value="ECO:0007669"/>
    <property type="project" value="Ensembl"/>
</dbReference>
<dbReference type="GO" id="GO:1902883">
    <property type="term" value="P:negative regulation of response to oxidative stress"/>
    <property type="evidence" value="ECO:0007669"/>
    <property type="project" value="Ensembl"/>
</dbReference>
<dbReference type="GO" id="GO:0000122">
    <property type="term" value="P:negative regulation of transcription by RNA polymerase II"/>
    <property type="evidence" value="ECO:0007669"/>
    <property type="project" value="Ensembl"/>
</dbReference>
<dbReference type="GO" id="GO:0043161">
    <property type="term" value="P:proteasome-mediated ubiquitin-dependent protein catabolic process"/>
    <property type="evidence" value="ECO:0000318"/>
    <property type="project" value="GO_Central"/>
</dbReference>
<dbReference type="GO" id="GO:0016567">
    <property type="term" value="P:protein ubiquitination"/>
    <property type="evidence" value="ECO:0000250"/>
    <property type="project" value="UniProtKB"/>
</dbReference>
<dbReference type="GO" id="GO:0010506">
    <property type="term" value="P:regulation of autophagy"/>
    <property type="evidence" value="ECO:0000250"/>
    <property type="project" value="UniProtKB"/>
</dbReference>
<dbReference type="GO" id="GO:0045604">
    <property type="term" value="P:regulation of epidermal cell differentiation"/>
    <property type="evidence" value="ECO:0007669"/>
    <property type="project" value="Ensembl"/>
</dbReference>
<dbReference type="GO" id="GO:0006511">
    <property type="term" value="P:ubiquitin-dependent protein catabolic process"/>
    <property type="evidence" value="ECO:0000250"/>
    <property type="project" value="UniProtKB"/>
</dbReference>
<dbReference type="CDD" id="cd18458">
    <property type="entry name" value="BACK_KLHL19_KEAP1"/>
    <property type="match status" value="1"/>
</dbReference>
<dbReference type="CDD" id="cd18248">
    <property type="entry name" value="BTB_POZ_KLHL19_KEAP1"/>
    <property type="match status" value="1"/>
</dbReference>
<dbReference type="FunFam" id="2.120.10.80:FF:000024">
    <property type="entry name" value="Kelch-like ECH-associated protein 1"/>
    <property type="match status" value="1"/>
</dbReference>
<dbReference type="FunFam" id="1.25.40.420:FF:000001">
    <property type="entry name" value="Kelch-like family member 12"/>
    <property type="match status" value="1"/>
</dbReference>
<dbReference type="FunFam" id="3.30.710.10:FF:000001">
    <property type="entry name" value="Kelch-like family member 20"/>
    <property type="match status" value="1"/>
</dbReference>
<dbReference type="Gene3D" id="1.25.40.420">
    <property type="match status" value="1"/>
</dbReference>
<dbReference type="Gene3D" id="2.120.10.80">
    <property type="entry name" value="Kelch-type beta propeller"/>
    <property type="match status" value="1"/>
</dbReference>
<dbReference type="Gene3D" id="3.30.710.10">
    <property type="entry name" value="Potassium Channel Kv1.1, Chain A"/>
    <property type="match status" value="1"/>
</dbReference>
<dbReference type="InterPro" id="IPR011705">
    <property type="entry name" value="BACK"/>
</dbReference>
<dbReference type="InterPro" id="IPR017096">
    <property type="entry name" value="BTB-kelch_protein"/>
</dbReference>
<dbReference type="InterPro" id="IPR000210">
    <property type="entry name" value="BTB/POZ_dom"/>
</dbReference>
<dbReference type="InterPro" id="IPR047098">
    <property type="entry name" value="KEAP1_BACK"/>
</dbReference>
<dbReference type="InterPro" id="IPR030563">
    <property type="entry name" value="KEAP1_BTB_POZ_dom"/>
</dbReference>
<dbReference type="InterPro" id="IPR015915">
    <property type="entry name" value="Kelch-typ_b-propeller"/>
</dbReference>
<dbReference type="InterPro" id="IPR006652">
    <property type="entry name" value="Kelch_1"/>
</dbReference>
<dbReference type="InterPro" id="IPR011333">
    <property type="entry name" value="SKP1/BTB/POZ_sf"/>
</dbReference>
<dbReference type="PANTHER" id="PTHR24412">
    <property type="entry name" value="KELCH PROTEIN"/>
    <property type="match status" value="1"/>
</dbReference>
<dbReference type="PANTHER" id="PTHR24412:SF162">
    <property type="entry name" value="KELCH-LIKE ECH-ASSOCIATED PROTEIN 1"/>
    <property type="match status" value="1"/>
</dbReference>
<dbReference type="Pfam" id="PF07707">
    <property type="entry name" value="BACK"/>
    <property type="match status" value="1"/>
</dbReference>
<dbReference type="Pfam" id="PF00651">
    <property type="entry name" value="BTB"/>
    <property type="match status" value="1"/>
</dbReference>
<dbReference type="Pfam" id="PF01344">
    <property type="entry name" value="Kelch_1"/>
    <property type="match status" value="3"/>
</dbReference>
<dbReference type="Pfam" id="PF24681">
    <property type="entry name" value="Kelch_KLHDC2_KLHL20_DRC7"/>
    <property type="match status" value="1"/>
</dbReference>
<dbReference type="PIRSF" id="PIRSF037037">
    <property type="entry name" value="Kelch-like_protein_gigaxonin"/>
    <property type="match status" value="1"/>
</dbReference>
<dbReference type="SMART" id="SM00875">
    <property type="entry name" value="BACK"/>
    <property type="match status" value="1"/>
</dbReference>
<dbReference type="SMART" id="SM00225">
    <property type="entry name" value="BTB"/>
    <property type="match status" value="1"/>
</dbReference>
<dbReference type="SMART" id="SM00612">
    <property type="entry name" value="Kelch"/>
    <property type="match status" value="6"/>
</dbReference>
<dbReference type="SUPFAM" id="SSF117281">
    <property type="entry name" value="Kelch motif"/>
    <property type="match status" value="1"/>
</dbReference>
<dbReference type="SUPFAM" id="SSF54695">
    <property type="entry name" value="POZ domain"/>
    <property type="match status" value="1"/>
</dbReference>
<dbReference type="PROSITE" id="PS50097">
    <property type="entry name" value="BTB"/>
    <property type="match status" value="1"/>
</dbReference>
<proteinExistence type="inferred from homology"/>
<accession>Q684M4</accession>
<comment type="function">
    <text evidence="1 2">Substrate-specific adapter of a BCR (BTB-CUL3-RBX1) E3 ubiquitin ligase complex that regulates the response to oxidative stress by targeting NFE2L2/NRF2 for ubiquitination. KEAP1 acts as a key sensor of oxidative and electrophilic stress: in normal conditions, the BCR(KEAP1) complex mediates ubiquitination and degradation of NFE2L2/NRF2, a transcription factor regulating expression of many cytoprotective genes. In response to oxidative stress, different electrophile metabolites trigger non-enzymatic covalent modifications of highly reactive cysteine residues in KEAP1, leading to inactivate the ubiquitin ligase activity of the BCR(KEAP1) complex, promoting NFE2L2/NRF2 nuclear accumulation and expression of phase II detoxifying enzymes. In response to selective autophagy, KEAP1 is sequestered in inclusion bodies following its interaction with SQSTM1/p62, leading to inactivation of the BCR(KEAP1) complex and activation of NFE2L2/NRF2. The BCR(KEAP1) complex also mediates ubiquitination of SQSTM1/p62, increasing SQSTM1/p62 sequestering activity and degradation (By similarity). The BCR(KEAP1) complex also targets BPTF and PGAM5 for ubiquitination and degradation by the proteasome (By similarity).</text>
</comment>
<comment type="activity regulation">
    <text evidence="2">Ubiquitin ligase activity of the BCR(KEAP1) complex is inhibited by oxidative stress and electrophile metabolites such as sulforaphane. Electrophile metabolites react with reactive cysteine residues in KEAP1 and trigger non-enzymatic covalent modifications of these cysteine residues, leading to inactivate the ubiquitin ligase activity of the BCR(KEAP1) complex. Selective autophagy also inactivates the BCR(KEAP1) complex via interaction between KEAP1 and SQSTM1/p62, which sequesters the complex in inclusion bodies and promotes its degradation.</text>
</comment>
<comment type="pathway">
    <text evidence="2">Protein modification; protein ubiquitination.</text>
</comment>
<comment type="subunit">
    <text evidence="1 2">Component of the BCR(KEAP1) E3 ubiquitin ligase complex, at least composed of 2 molecules of CUL3, 2 molecules of KEAP1, and RBX1. Interacts with NFE2L2/NRF2; the interaction is direct (By similarity). Forms a ternary complex with NFE2L2/NRF2 and PGAM5 (By similarity). Interacts with (phosphorylated) SQSTM1/p62; the interaction is direct and inactivates the BCR(KEAP1) complex by sequestering it in inclusion bodies, promoting its degradation (By similarity). Interacts with NFE2L1. Interacts with BPTF and PTMA. Interacts with MAP1LC3B. Interacts indirectly with ENC1. Interacts with SESN1 and SESN2. Interacts with HSP90AA1 and HSP90AB1 (By similarity). Interacts with PGCKA1; this interaction prevents the ubiquitination of KEAP1 by TRIM25, thus protecting KEAP1 protein from degradation (By similarity).</text>
</comment>
<comment type="subcellular location">
    <subcellularLocation>
        <location evidence="2">Cytoplasm</location>
    </subcellularLocation>
    <subcellularLocation>
        <location evidence="2">Nucleus</location>
    </subcellularLocation>
    <text evidence="2">Mainly cytoplasmic. In response to selective autophagy, relocalizes to inclusion bodies following interaction with SQSTM1/p62.</text>
</comment>
<comment type="domain">
    <text evidence="1">The Kelch repeats mediate interaction with NFE2L2/NRF2, BPTF and PGAM5.</text>
</comment>
<comment type="domain">
    <text evidence="2">KEAP1 contains reactive cysteine residues that act as sensors for endogenously produced and exogenously encountered small molecules, which react with sulfhydryl groups and modify the cysteine sensors, leading to impair ability of the BCR(KEAP1) complex to ubiquitinate target proteins.</text>
</comment>
<comment type="PTM">
    <text evidence="1 2">Non-enzymatic covalent modifications of reactive cysteines by electrophile metabolites inactivate the BCR(KEAP1) complex. Accumulation of fumarate promotes the formation of cysteine S-succination (S-(2-succinyl)cysteine), leading to inactivate the BCR(KEAP1) complex and promote NFE2L2/NRF2 nuclear accumulation and activation. Nitric oxide-dependent 8-Nitro-cGMP formation promotes cysteine guanylation (S-cGMP-cysteine), leading to NFE2L2/NRF2 nuclear accumulation and activation. Itaconate, an anti-inflammatory metabolite generated in response to lipopolysaccharide, alkylates cysteines, activating NFE2L2/NRF2 (By similarity). Methylglyoxal, a reactive metabolite that accumulates when the glycolytic enzyme PGK1 is inhibited, promotes formation of a methylimidazole cross-link between proximal Cys-151 and Arg-135 on another KEAP1 molecule, resulting in an inactive dimer that inactivates the BCR(KEAP1) complex (By similarity).</text>
</comment>
<comment type="PTM">
    <text evidence="2">Degraded via a proteasomal-independent process during selective autophagy: interaction with phosphorylated SQSTM1/p62 sequesters KEAP1 in inclusion bodies, leading to its degradation.</text>
</comment>
<comment type="PTM">
    <text evidence="1">Auto-ubiquitinated by the BCR(KEAP1) complex. Quinone-induced oxidative stress, but not sulforaphane, increases its ubiquitination. Ubiquitination and subsequent degradation is most pronounced following prolonged exposure of cells to oxidative stress, particularly in glutathione-deficient cells that are highly susceptible to oxidative stress. Deubiquitinated by USP25; leading to stabilization. Ubiquitinated by TRIM25; leading to degradation upon ER stress (By similarity).</text>
</comment>
<comment type="similarity">
    <text evidence="5">Belongs to the KEAP1 family.</text>
</comment>
<protein>
    <recommendedName>
        <fullName evidence="1">Kelch-like ECH-associated protein 1</fullName>
    </recommendedName>
</protein>
<organism>
    <name type="scientific">Sus scrofa</name>
    <name type="common">Pig</name>
    <dbReference type="NCBI Taxonomy" id="9823"/>
    <lineage>
        <taxon>Eukaryota</taxon>
        <taxon>Metazoa</taxon>
        <taxon>Chordata</taxon>
        <taxon>Craniata</taxon>
        <taxon>Vertebrata</taxon>
        <taxon>Euteleostomi</taxon>
        <taxon>Mammalia</taxon>
        <taxon>Eutheria</taxon>
        <taxon>Laurasiatheria</taxon>
        <taxon>Artiodactyla</taxon>
        <taxon>Suina</taxon>
        <taxon>Suidae</taxon>
        <taxon>Sus</taxon>
    </lineage>
</organism>